<comment type="function">
    <text evidence="1">Converts 2C-methyl-D-erythritol 2,4-cyclodiphosphate (ME-2,4cPP) into 1-hydroxy-2-methyl-2-(E)-butenyl 4-diphosphate.</text>
</comment>
<comment type="catalytic activity">
    <reaction evidence="1">
        <text>(2E)-4-hydroxy-3-methylbut-2-enyl diphosphate + oxidized [flavodoxin] + H2O + 2 H(+) = 2-C-methyl-D-erythritol 2,4-cyclic diphosphate + reduced [flavodoxin]</text>
        <dbReference type="Rhea" id="RHEA:43604"/>
        <dbReference type="Rhea" id="RHEA-COMP:10622"/>
        <dbReference type="Rhea" id="RHEA-COMP:10623"/>
        <dbReference type="ChEBI" id="CHEBI:15377"/>
        <dbReference type="ChEBI" id="CHEBI:15378"/>
        <dbReference type="ChEBI" id="CHEBI:57618"/>
        <dbReference type="ChEBI" id="CHEBI:58210"/>
        <dbReference type="ChEBI" id="CHEBI:58483"/>
        <dbReference type="ChEBI" id="CHEBI:128753"/>
        <dbReference type="EC" id="1.17.7.3"/>
    </reaction>
</comment>
<comment type="cofactor">
    <cofactor evidence="1">
        <name>[4Fe-4S] cluster</name>
        <dbReference type="ChEBI" id="CHEBI:49883"/>
    </cofactor>
    <text evidence="1">Binds 1 [4Fe-4S] cluster.</text>
</comment>
<comment type="pathway">
    <text evidence="1">Isoprenoid biosynthesis; isopentenyl diphosphate biosynthesis via DXP pathway; isopentenyl diphosphate from 1-deoxy-D-xylulose 5-phosphate: step 5/6.</text>
</comment>
<comment type="similarity">
    <text evidence="1">Belongs to the IspG family.</text>
</comment>
<feature type="chain" id="PRO_1000011529" description="4-hydroxy-3-methylbut-2-en-1-yl diphosphate synthase (flavodoxin)">
    <location>
        <begin position="1"/>
        <end position="377"/>
    </location>
</feature>
<feature type="binding site" evidence="1">
    <location>
        <position position="275"/>
    </location>
    <ligand>
        <name>[4Fe-4S] cluster</name>
        <dbReference type="ChEBI" id="CHEBI:49883"/>
    </ligand>
</feature>
<feature type="binding site" evidence="1">
    <location>
        <position position="278"/>
    </location>
    <ligand>
        <name>[4Fe-4S] cluster</name>
        <dbReference type="ChEBI" id="CHEBI:49883"/>
    </ligand>
</feature>
<feature type="binding site" evidence="1">
    <location>
        <position position="310"/>
    </location>
    <ligand>
        <name>[4Fe-4S] cluster</name>
        <dbReference type="ChEBI" id="CHEBI:49883"/>
    </ligand>
</feature>
<feature type="binding site" evidence="1">
    <location>
        <position position="317"/>
    </location>
    <ligand>
        <name>[4Fe-4S] cluster</name>
        <dbReference type="ChEBI" id="CHEBI:49883"/>
    </ligand>
</feature>
<name>ISPG_RUEST</name>
<accession>Q1GIC1</accession>
<organism>
    <name type="scientific">Ruegeria sp. (strain TM1040)</name>
    <name type="common">Silicibacter sp.</name>
    <dbReference type="NCBI Taxonomy" id="292414"/>
    <lineage>
        <taxon>Bacteria</taxon>
        <taxon>Pseudomonadati</taxon>
        <taxon>Pseudomonadota</taxon>
        <taxon>Alphaproteobacteria</taxon>
        <taxon>Rhodobacterales</taxon>
        <taxon>Roseobacteraceae</taxon>
        <taxon>Ruegeria</taxon>
    </lineage>
</organism>
<sequence length="377" mass="40233">MSMNHIRPWRNIERRKSRQIHVGNVPVGGDAPIAVQTMTNTLTTDIKGTIAQVQAAADAGADIVRVSVPDEASARALKEIVRESPVPIVADIHFHYKRGIEAAEAGAACLRINPGNIGDEKRVAEVIKAARDHNCSIRIGVNAGSLEKHLLEKYGEPCPDAMVESGLDHIKILQDHDFHEFKISVKASDVFMSAAAYQMLADATDAPIHLGITEAGGLMSGTIKSAIGLGQLLWMGIGDTLRVSLSADPVEEVKVGFEILKSLGLRHRGVNIISCPSCARQGFDVIKTVETLEERLEHIKTPMSLSIIGCVVNGPGEALMTDVGFTGGGAGSGMVYLAGKASHKMSNDQMIDHIVEEVEKKAAALDAQAAEDMKAAE</sequence>
<gene>
    <name evidence="1" type="primary">ispG</name>
    <name type="ordered locus">TM1040_0862</name>
</gene>
<reference key="1">
    <citation type="submission" date="2006-05" db="EMBL/GenBank/DDBJ databases">
        <title>Complete sequence of chromosome of Silicibacter sp. TM1040.</title>
        <authorList>
            <consortium name="US DOE Joint Genome Institute"/>
            <person name="Copeland A."/>
            <person name="Lucas S."/>
            <person name="Lapidus A."/>
            <person name="Barry K."/>
            <person name="Detter J.C."/>
            <person name="Glavina del Rio T."/>
            <person name="Hammon N."/>
            <person name="Israni S."/>
            <person name="Dalin E."/>
            <person name="Tice H."/>
            <person name="Pitluck S."/>
            <person name="Brettin T."/>
            <person name="Bruce D."/>
            <person name="Han C."/>
            <person name="Tapia R."/>
            <person name="Goodwin L."/>
            <person name="Thompson L.S."/>
            <person name="Gilna P."/>
            <person name="Schmutz J."/>
            <person name="Larimer F."/>
            <person name="Land M."/>
            <person name="Hauser L."/>
            <person name="Kyrpides N."/>
            <person name="Kim E."/>
            <person name="Belas R."/>
            <person name="Moran M.A."/>
            <person name="Buchan A."/>
            <person name="Gonzalez J.M."/>
            <person name="Schell M.A."/>
            <person name="Sun F."/>
            <person name="Richardson P."/>
        </authorList>
    </citation>
    <scope>NUCLEOTIDE SEQUENCE [LARGE SCALE GENOMIC DNA]</scope>
    <source>
        <strain>TM1040</strain>
    </source>
</reference>
<evidence type="ECO:0000255" key="1">
    <source>
        <dbReference type="HAMAP-Rule" id="MF_00159"/>
    </source>
</evidence>
<proteinExistence type="inferred from homology"/>
<keyword id="KW-0004">4Fe-4S</keyword>
<keyword id="KW-0408">Iron</keyword>
<keyword id="KW-0411">Iron-sulfur</keyword>
<keyword id="KW-0414">Isoprene biosynthesis</keyword>
<keyword id="KW-0479">Metal-binding</keyword>
<keyword id="KW-0560">Oxidoreductase</keyword>
<keyword id="KW-1185">Reference proteome</keyword>
<protein>
    <recommendedName>
        <fullName evidence="1">4-hydroxy-3-methylbut-2-en-1-yl diphosphate synthase (flavodoxin)</fullName>
        <ecNumber evidence="1">1.17.7.3</ecNumber>
    </recommendedName>
    <alternativeName>
        <fullName evidence="1">1-hydroxy-2-methyl-2-(E)-butenyl 4-diphosphate synthase</fullName>
    </alternativeName>
</protein>
<dbReference type="EC" id="1.17.7.3" evidence="1"/>
<dbReference type="EMBL" id="CP000377">
    <property type="protein sequence ID" value="ABF63595.1"/>
    <property type="molecule type" value="Genomic_DNA"/>
</dbReference>
<dbReference type="RefSeq" id="WP_011538207.1">
    <property type="nucleotide sequence ID" value="NC_008044.1"/>
</dbReference>
<dbReference type="SMR" id="Q1GIC1"/>
<dbReference type="STRING" id="292414.TM1040_0862"/>
<dbReference type="KEGG" id="sit:TM1040_0862"/>
<dbReference type="eggNOG" id="COG0821">
    <property type="taxonomic scope" value="Bacteria"/>
</dbReference>
<dbReference type="HOGENOM" id="CLU_042258_0_0_5"/>
<dbReference type="OrthoDB" id="9803214at2"/>
<dbReference type="UniPathway" id="UPA00056">
    <property type="reaction ID" value="UER00096"/>
</dbReference>
<dbReference type="Proteomes" id="UP000000636">
    <property type="component" value="Chromosome"/>
</dbReference>
<dbReference type="GO" id="GO:0051539">
    <property type="term" value="F:4 iron, 4 sulfur cluster binding"/>
    <property type="evidence" value="ECO:0007669"/>
    <property type="project" value="UniProtKB-UniRule"/>
</dbReference>
<dbReference type="GO" id="GO:0046429">
    <property type="term" value="F:4-hydroxy-3-methylbut-2-en-1-yl diphosphate synthase activity (ferredoxin)"/>
    <property type="evidence" value="ECO:0007669"/>
    <property type="project" value="UniProtKB-UniRule"/>
</dbReference>
<dbReference type="GO" id="GO:0141197">
    <property type="term" value="F:4-hydroxy-3-methylbut-2-enyl-diphosphate synthase activity (flavodoxin)"/>
    <property type="evidence" value="ECO:0007669"/>
    <property type="project" value="UniProtKB-EC"/>
</dbReference>
<dbReference type="GO" id="GO:0005506">
    <property type="term" value="F:iron ion binding"/>
    <property type="evidence" value="ECO:0007669"/>
    <property type="project" value="InterPro"/>
</dbReference>
<dbReference type="GO" id="GO:0019288">
    <property type="term" value="P:isopentenyl diphosphate biosynthetic process, methylerythritol 4-phosphate pathway"/>
    <property type="evidence" value="ECO:0007669"/>
    <property type="project" value="UniProtKB-UniRule"/>
</dbReference>
<dbReference type="GO" id="GO:0016114">
    <property type="term" value="P:terpenoid biosynthetic process"/>
    <property type="evidence" value="ECO:0007669"/>
    <property type="project" value="InterPro"/>
</dbReference>
<dbReference type="FunFam" id="3.20.20.20:FF:000001">
    <property type="entry name" value="4-hydroxy-3-methylbut-2-en-1-yl diphosphate synthase (flavodoxin)"/>
    <property type="match status" value="1"/>
</dbReference>
<dbReference type="Gene3D" id="3.20.20.20">
    <property type="entry name" value="Dihydropteroate synthase-like"/>
    <property type="match status" value="1"/>
</dbReference>
<dbReference type="Gene3D" id="3.30.413.10">
    <property type="entry name" value="Sulfite Reductase Hemoprotein, domain 1"/>
    <property type="match status" value="1"/>
</dbReference>
<dbReference type="HAMAP" id="MF_00159">
    <property type="entry name" value="IspG"/>
    <property type="match status" value="1"/>
</dbReference>
<dbReference type="InterPro" id="IPR011005">
    <property type="entry name" value="Dihydropteroate_synth-like_sf"/>
</dbReference>
<dbReference type="InterPro" id="IPR016425">
    <property type="entry name" value="IspG_bac"/>
</dbReference>
<dbReference type="InterPro" id="IPR004588">
    <property type="entry name" value="IspG_bac-typ"/>
</dbReference>
<dbReference type="InterPro" id="IPR045854">
    <property type="entry name" value="NO2/SO3_Rdtase_4Fe4S_sf"/>
</dbReference>
<dbReference type="NCBIfam" id="TIGR00612">
    <property type="entry name" value="ispG_gcpE"/>
    <property type="match status" value="1"/>
</dbReference>
<dbReference type="NCBIfam" id="NF001540">
    <property type="entry name" value="PRK00366.1"/>
    <property type="match status" value="1"/>
</dbReference>
<dbReference type="PANTHER" id="PTHR30454">
    <property type="entry name" value="4-HYDROXY-3-METHYLBUT-2-EN-1-YL DIPHOSPHATE SYNTHASE"/>
    <property type="match status" value="1"/>
</dbReference>
<dbReference type="PANTHER" id="PTHR30454:SF0">
    <property type="entry name" value="4-HYDROXY-3-METHYLBUT-2-EN-1-YL DIPHOSPHATE SYNTHASE (FERREDOXIN), CHLOROPLASTIC"/>
    <property type="match status" value="1"/>
</dbReference>
<dbReference type="Pfam" id="PF04551">
    <property type="entry name" value="GcpE"/>
    <property type="match status" value="1"/>
</dbReference>
<dbReference type="PIRSF" id="PIRSF004640">
    <property type="entry name" value="IspG"/>
    <property type="match status" value="1"/>
</dbReference>
<dbReference type="SUPFAM" id="SSF51717">
    <property type="entry name" value="Dihydropteroate synthetase-like"/>
    <property type="match status" value="1"/>
</dbReference>
<dbReference type="SUPFAM" id="SSF56014">
    <property type="entry name" value="Nitrite and sulphite reductase 4Fe-4S domain-like"/>
    <property type="match status" value="1"/>
</dbReference>